<name>RR14_ORYSI</name>
<sequence length="103" mass="12254">MAKKSLIQRERKRQKLEQKYHLIRRSSKKKIRSKVYPLSLSEKTKMREKLQSLPRNSAPTRLHRRCFLTGRPRANYRDFGLSGHILREMVYACLLPGATRSSW</sequence>
<organism>
    <name type="scientific">Oryza sativa subsp. indica</name>
    <name type="common">Rice</name>
    <dbReference type="NCBI Taxonomy" id="39946"/>
    <lineage>
        <taxon>Eukaryota</taxon>
        <taxon>Viridiplantae</taxon>
        <taxon>Streptophyta</taxon>
        <taxon>Embryophyta</taxon>
        <taxon>Tracheophyta</taxon>
        <taxon>Spermatophyta</taxon>
        <taxon>Magnoliopsida</taxon>
        <taxon>Liliopsida</taxon>
        <taxon>Poales</taxon>
        <taxon>Poaceae</taxon>
        <taxon>BOP clade</taxon>
        <taxon>Oryzoideae</taxon>
        <taxon>Oryzeae</taxon>
        <taxon>Oryzinae</taxon>
        <taxon>Oryza</taxon>
        <taxon>Oryza sativa</taxon>
    </lineage>
</organism>
<keyword id="KW-0150">Chloroplast</keyword>
<keyword id="KW-0934">Plastid</keyword>
<keyword id="KW-1185">Reference proteome</keyword>
<keyword id="KW-0687">Ribonucleoprotein</keyword>
<keyword id="KW-0689">Ribosomal protein</keyword>
<keyword id="KW-0694">RNA-binding</keyword>
<keyword id="KW-0699">rRNA-binding</keyword>
<accession>P0C466</accession>
<accession>P09096</accession>
<accession>Q6QY76</accession>
<accession>Q7G7B6</accession>
<gene>
    <name evidence="1" type="primary">rps14</name>
    <name type="ORF">9311046</name>
</gene>
<evidence type="ECO:0000255" key="1">
    <source>
        <dbReference type="HAMAP-Rule" id="MF_00537"/>
    </source>
</evidence>
<evidence type="ECO:0000305" key="2"/>
<comment type="function">
    <text evidence="1">Binds 16S rRNA, required for the assembly of 30S particles.</text>
</comment>
<comment type="subunit">
    <text evidence="1">Part of the 30S ribosomal subunit.</text>
</comment>
<comment type="subcellular location">
    <subcellularLocation>
        <location>Plastid</location>
        <location>Chloroplast</location>
    </subcellularLocation>
</comment>
<comment type="similarity">
    <text evidence="1">Belongs to the universal ribosomal protein uS14 family.</text>
</comment>
<reference key="1">
    <citation type="journal article" date="2006" name="Yi Chuan">
        <title>A universal high-throughput novel method of constructing the vectors.</title>
        <authorList>
            <person name="Lu Y.H."/>
            <person name="Ma L.X."/>
        </authorList>
    </citation>
    <scope>NUCLEOTIDE SEQUENCE [GENOMIC DNA]</scope>
    <source>
        <strain>cv. Minghui 63</strain>
    </source>
</reference>
<reference key="2">
    <citation type="journal article" date="2004" name="Plant Physiol.">
        <title>A comparison of rice chloroplast genomes.</title>
        <authorList>
            <person name="Tang J."/>
            <person name="Xia H."/>
            <person name="Cao M."/>
            <person name="Zhang X."/>
            <person name="Zeng W."/>
            <person name="Hu S."/>
            <person name="Tong W."/>
            <person name="Wang J."/>
            <person name="Wang J."/>
            <person name="Yu J."/>
            <person name="Yang H."/>
            <person name="Zhu L."/>
        </authorList>
    </citation>
    <scope>NUCLEOTIDE SEQUENCE [LARGE SCALE GENOMIC DNA]</scope>
    <source>
        <strain>cv. 93-11</strain>
    </source>
</reference>
<dbReference type="EMBL" id="DQ507384">
    <property type="protein sequence ID" value="ABF59863.1"/>
    <property type="molecule type" value="Genomic_DNA"/>
</dbReference>
<dbReference type="EMBL" id="AY522329">
    <property type="protein sequence ID" value="AAS46053.1"/>
    <property type="molecule type" value="Genomic_DNA"/>
</dbReference>
<dbReference type="RefSeq" id="NP_039381.1">
    <property type="nucleotide sequence ID" value="NC_001320.1"/>
</dbReference>
<dbReference type="RefSeq" id="YP_009161362.1">
    <property type="nucleotide sequence ID" value="NC_027678.1"/>
</dbReference>
<dbReference type="RefSeq" id="YP_654213.1">
    <property type="nucleotide sequence ID" value="NC_008155.1"/>
</dbReference>
<dbReference type="SMR" id="P0C466"/>
<dbReference type="STRING" id="39946.P0C466"/>
<dbReference type="EnsemblPlants" id="BGIOSGA033317-TA">
    <property type="protein sequence ID" value="BGIOSGA033317-PA"/>
    <property type="gene ID" value="BGIOSGA033317"/>
</dbReference>
<dbReference type="EnsemblPlants" id="BGIOSGA033318-TA">
    <property type="protein sequence ID" value="BGIOSGA033318-PA"/>
    <property type="gene ID" value="BGIOSGA033318"/>
</dbReference>
<dbReference type="EnsemblPlants" id="BGIOSGA040273-TA">
    <property type="protein sequence ID" value="BGIOSGA040273-PA"/>
    <property type="gene ID" value="BGIOSGA040273"/>
</dbReference>
<dbReference type="GeneID" id="3131436"/>
<dbReference type="GeneID" id="4126883"/>
<dbReference type="Gramene" id="BGIOSGA033317-TA">
    <property type="protein sequence ID" value="BGIOSGA033317-PA"/>
    <property type="gene ID" value="BGIOSGA033317"/>
</dbReference>
<dbReference type="Gramene" id="BGIOSGA033318-TA">
    <property type="protein sequence ID" value="BGIOSGA033318-PA"/>
    <property type="gene ID" value="BGIOSGA033318"/>
</dbReference>
<dbReference type="Gramene" id="BGIOSGA040273-TA">
    <property type="protein sequence ID" value="BGIOSGA040273-PA"/>
    <property type="gene ID" value="BGIOSGA040273"/>
</dbReference>
<dbReference type="KEGG" id="osa:3131436"/>
<dbReference type="HOGENOM" id="CLU_139869_0_1_1"/>
<dbReference type="OMA" id="RIKFRDL"/>
<dbReference type="Proteomes" id="UP000007015">
    <property type="component" value="Chloroplast"/>
</dbReference>
<dbReference type="GO" id="GO:0009507">
    <property type="term" value="C:chloroplast"/>
    <property type="evidence" value="ECO:0007669"/>
    <property type="project" value="UniProtKB-SubCell"/>
</dbReference>
<dbReference type="GO" id="GO:0009536">
    <property type="term" value="C:plastid"/>
    <property type="evidence" value="ECO:0000305"/>
    <property type="project" value="Gramene"/>
</dbReference>
<dbReference type="GO" id="GO:0015935">
    <property type="term" value="C:small ribosomal subunit"/>
    <property type="evidence" value="ECO:0007669"/>
    <property type="project" value="TreeGrafter"/>
</dbReference>
<dbReference type="GO" id="GO:0019843">
    <property type="term" value="F:rRNA binding"/>
    <property type="evidence" value="ECO:0007669"/>
    <property type="project" value="UniProtKB-UniRule"/>
</dbReference>
<dbReference type="GO" id="GO:0003735">
    <property type="term" value="F:structural constituent of ribosome"/>
    <property type="evidence" value="ECO:0007669"/>
    <property type="project" value="InterPro"/>
</dbReference>
<dbReference type="GO" id="GO:0006412">
    <property type="term" value="P:translation"/>
    <property type="evidence" value="ECO:0007669"/>
    <property type="project" value="UniProtKB-UniRule"/>
</dbReference>
<dbReference type="FunFam" id="1.10.287.1480:FF:000001">
    <property type="entry name" value="30S ribosomal protein S14"/>
    <property type="match status" value="1"/>
</dbReference>
<dbReference type="Gene3D" id="1.10.287.1480">
    <property type="match status" value="1"/>
</dbReference>
<dbReference type="HAMAP" id="MF_00537">
    <property type="entry name" value="Ribosomal_uS14_1"/>
    <property type="match status" value="1"/>
</dbReference>
<dbReference type="InterPro" id="IPR001209">
    <property type="entry name" value="Ribosomal_uS14"/>
</dbReference>
<dbReference type="InterPro" id="IPR023036">
    <property type="entry name" value="Ribosomal_uS14_bac/plastid"/>
</dbReference>
<dbReference type="InterPro" id="IPR018271">
    <property type="entry name" value="Ribosomal_uS14_CS"/>
</dbReference>
<dbReference type="NCBIfam" id="NF006477">
    <property type="entry name" value="PRK08881.1"/>
    <property type="match status" value="1"/>
</dbReference>
<dbReference type="PANTHER" id="PTHR19836">
    <property type="entry name" value="30S RIBOSOMAL PROTEIN S14"/>
    <property type="match status" value="1"/>
</dbReference>
<dbReference type="PANTHER" id="PTHR19836:SF19">
    <property type="entry name" value="SMALL RIBOSOMAL SUBUNIT PROTEIN US14M"/>
    <property type="match status" value="1"/>
</dbReference>
<dbReference type="Pfam" id="PF00253">
    <property type="entry name" value="Ribosomal_S14"/>
    <property type="match status" value="1"/>
</dbReference>
<dbReference type="SUPFAM" id="SSF57716">
    <property type="entry name" value="Glucocorticoid receptor-like (DNA-binding domain)"/>
    <property type="match status" value="1"/>
</dbReference>
<dbReference type="PROSITE" id="PS00527">
    <property type="entry name" value="RIBOSOMAL_S14"/>
    <property type="match status" value="1"/>
</dbReference>
<geneLocation type="chloroplast"/>
<feature type="chain" id="PRO_0000290062" description="Small ribosomal subunit protein uS14c">
    <location>
        <begin position="1"/>
        <end position="103"/>
    </location>
</feature>
<proteinExistence type="inferred from homology"/>
<protein>
    <recommendedName>
        <fullName evidence="1">Small ribosomal subunit protein uS14c</fullName>
    </recommendedName>
    <alternativeName>
        <fullName evidence="2">30S ribosomal protein S14, chloroplastic</fullName>
    </alternativeName>
</protein>